<keyword id="KW-0004">4Fe-4S</keyword>
<keyword id="KW-0150">Chloroplast</keyword>
<keyword id="KW-0408">Iron</keyword>
<keyword id="KW-0411">Iron-sulfur</keyword>
<keyword id="KW-0479">Metal-binding</keyword>
<keyword id="KW-0934">Plastid</keyword>
<keyword id="KW-1185">Reference proteome</keyword>
<keyword id="KW-0949">S-adenosyl-L-methionine</keyword>
<keyword id="KW-0808">Transferase</keyword>
<keyword id="KW-0809">Transit peptide</keyword>
<dbReference type="EC" id="2.8.1.8" evidence="1"/>
<dbReference type="EMBL" id="CM009308">
    <property type="protein sequence ID" value="ERP49380.1"/>
    <property type="molecule type" value="Genomic_DNA"/>
</dbReference>
<dbReference type="SMR" id="B9N2B0"/>
<dbReference type="FunCoup" id="B9N2B0">
    <property type="interactions" value="3207"/>
</dbReference>
<dbReference type="STRING" id="3694.B9N2B0"/>
<dbReference type="EnsemblPlants" id="Potri.019G102700.1.v4.1">
    <property type="protein sequence ID" value="Potri.019G102700.1.v4.1"/>
    <property type="gene ID" value="Potri.019G102700.v4.1"/>
</dbReference>
<dbReference type="GeneID" id="18108579"/>
<dbReference type="Gramene" id="Potri.019G102700.1.v4.1">
    <property type="protein sequence ID" value="Potri.019G102700.1.v4.1"/>
    <property type="gene ID" value="Potri.019G102700.v4.1"/>
</dbReference>
<dbReference type="KEGG" id="pop:18108579"/>
<dbReference type="eggNOG" id="KOG2672">
    <property type="taxonomic scope" value="Eukaryota"/>
</dbReference>
<dbReference type="HOGENOM" id="CLU_033144_2_0_1"/>
<dbReference type="InParanoid" id="B9N2B0"/>
<dbReference type="OMA" id="IRCESKD"/>
<dbReference type="OrthoDB" id="3231at2759"/>
<dbReference type="UniPathway" id="UPA00538">
    <property type="reaction ID" value="UER00593"/>
</dbReference>
<dbReference type="Proteomes" id="UP000006729">
    <property type="component" value="Chromosome 19"/>
</dbReference>
<dbReference type="ExpressionAtlas" id="B9N2B0">
    <property type="expression patterns" value="baseline and differential"/>
</dbReference>
<dbReference type="GO" id="GO:0009507">
    <property type="term" value="C:chloroplast"/>
    <property type="evidence" value="ECO:0007669"/>
    <property type="project" value="UniProtKB-SubCell"/>
</dbReference>
<dbReference type="GO" id="GO:0005739">
    <property type="term" value="C:mitochondrion"/>
    <property type="evidence" value="ECO:0000318"/>
    <property type="project" value="GO_Central"/>
</dbReference>
<dbReference type="GO" id="GO:0051539">
    <property type="term" value="F:4 iron, 4 sulfur cluster binding"/>
    <property type="evidence" value="ECO:0007669"/>
    <property type="project" value="UniProtKB-UniRule"/>
</dbReference>
<dbReference type="GO" id="GO:0016992">
    <property type="term" value="F:lipoate synthase activity"/>
    <property type="evidence" value="ECO:0000318"/>
    <property type="project" value="GO_Central"/>
</dbReference>
<dbReference type="GO" id="GO:0046872">
    <property type="term" value="F:metal ion binding"/>
    <property type="evidence" value="ECO:0007669"/>
    <property type="project" value="UniProtKB-KW"/>
</dbReference>
<dbReference type="GO" id="GO:0009107">
    <property type="term" value="P:lipoate biosynthetic process"/>
    <property type="evidence" value="ECO:0000318"/>
    <property type="project" value="GO_Central"/>
</dbReference>
<dbReference type="CDD" id="cd01335">
    <property type="entry name" value="Radical_SAM"/>
    <property type="match status" value="1"/>
</dbReference>
<dbReference type="FunFam" id="3.20.20.70:FF:000036">
    <property type="entry name" value="Lipoyl synthase, mitochondrial"/>
    <property type="match status" value="1"/>
</dbReference>
<dbReference type="Gene3D" id="3.20.20.70">
    <property type="entry name" value="Aldolase class I"/>
    <property type="match status" value="1"/>
</dbReference>
<dbReference type="HAMAP" id="MF_00206">
    <property type="entry name" value="Lipoyl_synth"/>
    <property type="match status" value="1"/>
</dbReference>
<dbReference type="HAMAP" id="MF_03129">
    <property type="entry name" value="Lipoyl_synth_plantC"/>
    <property type="match status" value="1"/>
</dbReference>
<dbReference type="InterPro" id="IPR013785">
    <property type="entry name" value="Aldolase_TIM"/>
</dbReference>
<dbReference type="InterPro" id="IPR006638">
    <property type="entry name" value="Elp3/MiaA/NifB-like_rSAM"/>
</dbReference>
<dbReference type="InterPro" id="IPR031691">
    <property type="entry name" value="LIAS_N"/>
</dbReference>
<dbReference type="InterPro" id="IPR003698">
    <property type="entry name" value="Lipoyl_synth"/>
</dbReference>
<dbReference type="InterPro" id="IPR027526">
    <property type="entry name" value="Lipoyl_synth_chlpt"/>
</dbReference>
<dbReference type="InterPro" id="IPR007197">
    <property type="entry name" value="rSAM"/>
</dbReference>
<dbReference type="NCBIfam" id="TIGR00510">
    <property type="entry name" value="lipA"/>
    <property type="match status" value="1"/>
</dbReference>
<dbReference type="NCBIfam" id="NF004019">
    <property type="entry name" value="PRK05481.1"/>
    <property type="match status" value="1"/>
</dbReference>
<dbReference type="NCBIfam" id="NF009544">
    <property type="entry name" value="PRK12928.1"/>
    <property type="match status" value="1"/>
</dbReference>
<dbReference type="PANTHER" id="PTHR10949">
    <property type="entry name" value="LIPOYL SYNTHASE"/>
    <property type="match status" value="1"/>
</dbReference>
<dbReference type="PANTHER" id="PTHR10949:SF38">
    <property type="entry name" value="LIPOYL SYNTHASE, CHLOROPLASTIC"/>
    <property type="match status" value="1"/>
</dbReference>
<dbReference type="Pfam" id="PF16881">
    <property type="entry name" value="LIAS_N"/>
    <property type="match status" value="1"/>
</dbReference>
<dbReference type="Pfam" id="PF04055">
    <property type="entry name" value="Radical_SAM"/>
    <property type="match status" value="1"/>
</dbReference>
<dbReference type="SFLD" id="SFLDF00271">
    <property type="entry name" value="lipoyl_synthase"/>
    <property type="match status" value="1"/>
</dbReference>
<dbReference type="SFLD" id="SFLDG01058">
    <property type="entry name" value="lipoyl_synthase_like"/>
    <property type="match status" value="1"/>
</dbReference>
<dbReference type="SMART" id="SM00729">
    <property type="entry name" value="Elp3"/>
    <property type="match status" value="1"/>
</dbReference>
<dbReference type="SUPFAM" id="SSF102114">
    <property type="entry name" value="Radical SAM enzymes"/>
    <property type="match status" value="1"/>
</dbReference>
<dbReference type="PROSITE" id="PS51918">
    <property type="entry name" value="RADICAL_SAM"/>
    <property type="match status" value="1"/>
</dbReference>
<protein>
    <recommendedName>
        <fullName>Lipoyl synthase 2, chloroplastic</fullName>
        <ecNumber evidence="1">2.8.1.8</ecNumber>
    </recommendedName>
    <alternativeName>
        <fullName evidence="1">Lipoate synthase 2</fullName>
        <shortName evidence="1">LS 2</shortName>
        <shortName evidence="1">Lip-syn 2</shortName>
    </alternativeName>
    <alternativeName>
        <fullName evidence="1">Lipoate synthase, plastidial 2</fullName>
        <shortName evidence="1">LIP1p 2</shortName>
    </alternativeName>
    <alternativeName>
        <fullName evidence="1">Lipoic acid synthase 2</fullName>
    </alternativeName>
</protein>
<feature type="transit peptide" description="Chloroplast" evidence="1">
    <location>
        <begin position="1"/>
        <end position="35"/>
    </location>
</feature>
<feature type="chain" id="PRO_0000398868" description="Lipoyl synthase 2, chloroplastic">
    <location>
        <begin position="36"/>
        <end position="397"/>
    </location>
</feature>
<feature type="domain" description="Radical SAM core" evidence="2">
    <location>
        <begin position="142"/>
        <end position="363"/>
    </location>
</feature>
<feature type="region of interest" description="Disordered" evidence="3">
    <location>
        <begin position="49"/>
        <end position="85"/>
    </location>
</feature>
<feature type="compositionally biased region" description="Low complexity" evidence="3">
    <location>
        <begin position="54"/>
        <end position="67"/>
    </location>
</feature>
<feature type="binding site" evidence="1">
    <location>
        <position position="128"/>
    </location>
    <ligand>
        <name>[4Fe-4S] cluster</name>
        <dbReference type="ChEBI" id="CHEBI:49883"/>
        <label>1</label>
    </ligand>
</feature>
<feature type="binding site" evidence="1">
    <location>
        <position position="133"/>
    </location>
    <ligand>
        <name>[4Fe-4S] cluster</name>
        <dbReference type="ChEBI" id="CHEBI:49883"/>
        <label>1</label>
    </ligand>
</feature>
<feature type="binding site" evidence="1">
    <location>
        <position position="139"/>
    </location>
    <ligand>
        <name>[4Fe-4S] cluster</name>
        <dbReference type="ChEBI" id="CHEBI:49883"/>
        <label>1</label>
    </ligand>
</feature>
<feature type="binding site" evidence="1">
    <location>
        <position position="159"/>
    </location>
    <ligand>
        <name>[4Fe-4S] cluster</name>
        <dbReference type="ChEBI" id="CHEBI:49883"/>
        <label>2</label>
        <note>4Fe-4S-S-AdoMet</note>
    </ligand>
</feature>
<feature type="binding site" evidence="1">
    <location>
        <position position="163"/>
    </location>
    <ligand>
        <name>[4Fe-4S] cluster</name>
        <dbReference type="ChEBI" id="CHEBI:49883"/>
        <label>2</label>
        <note>4Fe-4S-S-AdoMet</note>
    </ligand>
</feature>
<feature type="binding site" evidence="1">
    <location>
        <position position="166"/>
    </location>
    <ligand>
        <name>[4Fe-4S] cluster</name>
        <dbReference type="ChEBI" id="CHEBI:49883"/>
        <label>2</label>
        <note>4Fe-4S-S-AdoMet</note>
    </ligand>
</feature>
<feature type="binding site" evidence="1">
    <location>
        <position position="374"/>
    </location>
    <ligand>
        <name>[4Fe-4S] cluster</name>
        <dbReference type="ChEBI" id="CHEBI:49883"/>
        <label>1</label>
    </ligand>
</feature>
<sequence length="397" mass="43638">MIEQSLSKPSFSLSIPIPKAPKSKSSFFCSYSKIRCESVDYPSLTKIDAKHPQNSTTINNGSSSSASVDLKNNEKGPYPYPGGGKMGPYTGRDLNEKKPEWLRQRAPQGERFEEVKESISRLNLNTVCQEAQCPNIGECWNGGGDGIATATIMVLGDTCTRGCRFCAVKTSRTPPPPDPMEPLNTALAIASWGVDYIVITSVDRDDLSDGGSGHFAQTVRAMKELKPEIMVECLTSDFRGDLKAVDTLVHSGLDVFAHNVETVKRLQRIVRDPRAGYEQSLSVLKHAKVSKKGMITKTSIMLGLGETDDEVKEAMTDLRAIDVDILTFGQYLQPTPLHLTVKEYVSPEKFAYWKEYGESIGFRYVASGPLVRSSYRAGELFVKTMVKESAKEAAAIS</sequence>
<comment type="function">
    <text evidence="1">Catalyzes the radical-mediated insertion of two sulfur atoms into the C-6 and C-8 positions of the octanoyl moiety bound to the lipoyl domains of lipoate-dependent enzymes, thereby converting the octanoylated domains into lipoylated derivatives.</text>
</comment>
<comment type="catalytic activity">
    <reaction evidence="1">
        <text>[[Fe-S] cluster scaffold protein carrying a second [4Fe-4S](2+) cluster] + N(6)-octanoyl-L-lysyl-[protein] + 2 oxidized [2Fe-2S]-[ferredoxin] + 2 S-adenosyl-L-methionine + 4 H(+) = [[Fe-S] cluster scaffold protein] + N(6)-[(R)-dihydrolipoyl]-L-lysyl-[protein] + 4 Fe(3+) + 2 hydrogen sulfide + 2 5'-deoxyadenosine + 2 L-methionine + 2 reduced [2Fe-2S]-[ferredoxin]</text>
        <dbReference type="Rhea" id="RHEA:16585"/>
        <dbReference type="Rhea" id="RHEA-COMP:9928"/>
        <dbReference type="Rhea" id="RHEA-COMP:10000"/>
        <dbReference type="Rhea" id="RHEA-COMP:10001"/>
        <dbReference type="Rhea" id="RHEA-COMP:10475"/>
        <dbReference type="Rhea" id="RHEA-COMP:14568"/>
        <dbReference type="Rhea" id="RHEA-COMP:14569"/>
        <dbReference type="ChEBI" id="CHEBI:15378"/>
        <dbReference type="ChEBI" id="CHEBI:17319"/>
        <dbReference type="ChEBI" id="CHEBI:29034"/>
        <dbReference type="ChEBI" id="CHEBI:29919"/>
        <dbReference type="ChEBI" id="CHEBI:33722"/>
        <dbReference type="ChEBI" id="CHEBI:33737"/>
        <dbReference type="ChEBI" id="CHEBI:33738"/>
        <dbReference type="ChEBI" id="CHEBI:57844"/>
        <dbReference type="ChEBI" id="CHEBI:59789"/>
        <dbReference type="ChEBI" id="CHEBI:78809"/>
        <dbReference type="ChEBI" id="CHEBI:83100"/>
        <dbReference type="EC" id="2.8.1.8"/>
    </reaction>
</comment>
<comment type="cofactor">
    <cofactor evidence="1">
        <name>[4Fe-4S] cluster</name>
        <dbReference type="ChEBI" id="CHEBI:49883"/>
    </cofactor>
    <text evidence="1">Binds 2 [4Fe-4S] clusters per subunit. One cluster is coordinated with 3 cysteines and an exchangeable S-adenosyl-L-methionine.</text>
</comment>
<comment type="pathway">
    <text evidence="1">Protein modification; protein lipoylation via endogenous pathway; protein N(6)-(lipoyl)lysine from octanoyl-[acyl-carrier-protein]: step 2/2.</text>
</comment>
<comment type="subcellular location">
    <subcellularLocation>
        <location evidence="1">Plastid</location>
        <location evidence="1">Chloroplast</location>
    </subcellularLocation>
</comment>
<comment type="similarity">
    <text evidence="1">Belongs to the radical SAM superfamily. Lipoyl synthase family.</text>
</comment>
<accession>B9N2B0</accession>
<accession>U5FF64</accession>
<reference key="1">
    <citation type="journal article" date="2006" name="Science">
        <title>The genome of black cottonwood, Populus trichocarpa (Torr. &amp; Gray).</title>
        <authorList>
            <person name="Tuskan G.A."/>
            <person name="Difazio S."/>
            <person name="Jansson S."/>
            <person name="Bohlmann J."/>
            <person name="Grigoriev I."/>
            <person name="Hellsten U."/>
            <person name="Putnam N."/>
            <person name="Ralph S."/>
            <person name="Rombauts S."/>
            <person name="Salamov A."/>
            <person name="Schein J."/>
            <person name="Sterck L."/>
            <person name="Aerts A."/>
            <person name="Bhalerao R.R."/>
            <person name="Bhalerao R.P."/>
            <person name="Blaudez D."/>
            <person name="Boerjan W."/>
            <person name="Brun A."/>
            <person name="Brunner A."/>
            <person name="Busov V."/>
            <person name="Campbell M."/>
            <person name="Carlson J."/>
            <person name="Chalot M."/>
            <person name="Chapman J."/>
            <person name="Chen G.-L."/>
            <person name="Cooper D."/>
            <person name="Coutinho P.M."/>
            <person name="Couturier J."/>
            <person name="Covert S."/>
            <person name="Cronk Q."/>
            <person name="Cunningham R."/>
            <person name="Davis J."/>
            <person name="Degroeve S."/>
            <person name="Dejardin A."/>
            <person name="dePamphilis C.W."/>
            <person name="Detter J."/>
            <person name="Dirks B."/>
            <person name="Dubchak I."/>
            <person name="Duplessis S."/>
            <person name="Ehlting J."/>
            <person name="Ellis B."/>
            <person name="Gendler K."/>
            <person name="Goodstein D."/>
            <person name="Gribskov M."/>
            <person name="Grimwood J."/>
            <person name="Groover A."/>
            <person name="Gunter L."/>
            <person name="Hamberger B."/>
            <person name="Heinze B."/>
            <person name="Helariutta Y."/>
            <person name="Henrissat B."/>
            <person name="Holligan D."/>
            <person name="Holt R."/>
            <person name="Huang W."/>
            <person name="Islam-Faridi N."/>
            <person name="Jones S."/>
            <person name="Jones-Rhoades M."/>
            <person name="Jorgensen R."/>
            <person name="Joshi C."/>
            <person name="Kangasjaervi J."/>
            <person name="Karlsson J."/>
            <person name="Kelleher C."/>
            <person name="Kirkpatrick R."/>
            <person name="Kirst M."/>
            <person name="Kohler A."/>
            <person name="Kalluri U."/>
            <person name="Larimer F."/>
            <person name="Leebens-Mack J."/>
            <person name="Leple J.-C."/>
            <person name="Locascio P."/>
            <person name="Lou Y."/>
            <person name="Lucas S."/>
            <person name="Martin F."/>
            <person name="Montanini B."/>
            <person name="Napoli C."/>
            <person name="Nelson D.R."/>
            <person name="Nelson C."/>
            <person name="Nieminen K."/>
            <person name="Nilsson O."/>
            <person name="Pereda V."/>
            <person name="Peter G."/>
            <person name="Philippe R."/>
            <person name="Pilate G."/>
            <person name="Poliakov A."/>
            <person name="Razumovskaya J."/>
            <person name="Richardson P."/>
            <person name="Rinaldi C."/>
            <person name="Ritland K."/>
            <person name="Rouze P."/>
            <person name="Ryaboy D."/>
            <person name="Schmutz J."/>
            <person name="Schrader J."/>
            <person name="Segerman B."/>
            <person name="Shin H."/>
            <person name="Siddiqui A."/>
            <person name="Sterky F."/>
            <person name="Terry A."/>
            <person name="Tsai C.-J."/>
            <person name="Uberbacher E."/>
            <person name="Unneberg P."/>
            <person name="Vahala J."/>
            <person name="Wall K."/>
            <person name="Wessler S."/>
            <person name="Yang G."/>
            <person name="Yin T."/>
            <person name="Douglas C."/>
            <person name="Marra M."/>
            <person name="Sandberg G."/>
            <person name="Van de Peer Y."/>
            <person name="Rokhsar D.S."/>
        </authorList>
    </citation>
    <scope>NUCLEOTIDE SEQUENCE [LARGE SCALE GENOMIC DNA]</scope>
    <source>
        <strain>cv. Nisqually</strain>
    </source>
</reference>
<reference key="2">
    <citation type="submission" date="2008-12" db="EMBL/GenBank/DDBJ databases">
        <authorList>
            <consortium name="US DOE Joint Genome Institute (JGI-PGF)"/>
            <person name="Grigoriev I.V."/>
            <person name="Terry A."/>
            <person name="Salamov A.A."/>
            <person name="Otillar R."/>
            <person name="Lou Y."/>
            <person name="Lucas S."/>
            <person name="Hammon N."/>
            <person name="Glavina del Rio T."/>
            <person name="Detter J."/>
            <person name="Kalin E."/>
            <person name="Tice H."/>
            <person name="Pitluck S."/>
            <person name="Chapman J."/>
            <person name="Putnam N.H."/>
            <person name="Brunner A."/>
            <person name="Busov V."/>
            <person name="Campbell M."/>
            <person name="Chalot M."/>
            <person name="Covert S."/>
            <person name="Davis J."/>
            <person name="DiFazio S."/>
            <person name="Gribskov M."/>
            <person name="Gunter L."/>
            <person name="Hamberger B."/>
            <person name="Jansson S."/>
            <person name="Joshi C."/>
            <person name="Larimer F."/>
            <person name="Martin F."/>
            <person name="Napoli C."/>
            <person name="Nelson D."/>
            <person name="Ralph S."/>
            <person name="Rombauts S."/>
            <person name="Rouze P."/>
            <person name="Schrader J."/>
            <person name="Tsai C."/>
            <person name="Vahala J."/>
            <person name="Tuskan G."/>
            <person name="Rokhsar D."/>
        </authorList>
    </citation>
    <scope>GENOME REANNOTATION</scope>
    <source>
        <strain>cv. Nisqually</strain>
    </source>
</reference>
<evidence type="ECO:0000255" key="1">
    <source>
        <dbReference type="HAMAP-Rule" id="MF_03129"/>
    </source>
</evidence>
<evidence type="ECO:0000255" key="2">
    <source>
        <dbReference type="PROSITE-ProRule" id="PRU01266"/>
    </source>
</evidence>
<evidence type="ECO:0000256" key="3">
    <source>
        <dbReference type="SAM" id="MobiDB-lite"/>
    </source>
</evidence>
<gene>
    <name evidence="1" type="primary">LIP1P-2</name>
    <name type="ORF">POPTR_0019s13380g</name>
</gene>
<proteinExistence type="inferred from homology"/>
<organism>
    <name type="scientific">Populus trichocarpa</name>
    <name type="common">Western balsam poplar</name>
    <name type="synonym">Populus balsamifera subsp. trichocarpa</name>
    <dbReference type="NCBI Taxonomy" id="3694"/>
    <lineage>
        <taxon>Eukaryota</taxon>
        <taxon>Viridiplantae</taxon>
        <taxon>Streptophyta</taxon>
        <taxon>Embryophyta</taxon>
        <taxon>Tracheophyta</taxon>
        <taxon>Spermatophyta</taxon>
        <taxon>Magnoliopsida</taxon>
        <taxon>eudicotyledons</taxon>
        <taxon>Gunneridae</taxon>
        <taxon>Pentapetalae</taxon>
        <taxon>rosids</taxon>
        <taxon>fabids</taxon>
        <taxon>Malpighiales</taxon>
        <taxon>Salicaceae</taxon>
        <taxon>Saliceae</taxon>
        <taxon>Populus</taxon>
    </lineage>
</organism>
<name>LISC2_POPTR</name>